<accession>Q28HC7</accession>
<name>COMD6_XENTR</name>
<organism>
    <name type="scientific">Xenopus tropicalis</name>
    <name type="common">Western clawed frog</name>
    <name type="synonym">Silurana tropicalis</name>
    <dbReference type="NCBI Taxonomy" id="8364"/>
    <lineage>
        <taxon>Eukaryota</taxon>
        <taxon>Metazoa</taxon>
        <taxon>Chordata</taxon>
        <taxon>Craniata</taxon>
        <taxon>Vertebrata</taxon>
        <taxon>Euteleostomi</taxon>
        <taxon>Amphibia</taxon>
        <taxon>Batrachia</taxon>
        <taxon>Anura</taxon>
        <taxon>Pipoidea</taxon>
        <taxon>Pipidae</taxon>
        <taxon>Xenopodinae</taxon>
        <taxon>Xenopus</taxon>
        <taxon>Silurana</taxon>
    </lineage>
</organism>
<proteinExistence type="evidence at transcript level"/>
<keyword id="KW-0963">Cytoplasm</keyword>
<keyword id="KW-0539">Nucleus</keyword>
<keyword id="KW-1185">Reference proteome</keyword>
<keyword id="KW-0804">Transcription</keyword>
<keyword id="KW-0805">Transcription regulation</keyword>
<keyword id="KW-0833">Ubl conjugation pathway</keyword>
<gene>
    <name type="primary">commd6</name>
    <name type="ORF">TEgg014m16.1</name>
</gene>
<evidence type="ECO:0000250" key="1">
    <source>
        <dbReference type="UniProtKB" id="Q7Z4G1"/>
    </source>
</evidence>
<evidence type="ECO:0000255" key="2">
    <source>
        <dbReference type="PROSITE-ProRule" id="PRU00602"/>
    </source>
</evidence>
<evidence type="ECO:0000305" key="3"/>
<dbReference type="EMBL" id="CR760938">
    <property type="protein sequence ID" value="CAJ82026.1"/>
    <property type="molecule type" value="mRNA"/>
</dbReference>
<dbReference type="RefSeq" id="NP_001016464.1">
    <property type="nucleotide sequence ID" value="NM_001016464.2"/>
</dbReference>
<dbReference type="SMR" id="Q28HC7"/>
<dbReference type="PaxDb" id="8364-ENSXETP00000010225"/>
<dbReference type="GeneID" id="549218"/>
<dbReference type="KEGG" id="xtr:549218"/>
<dbReference type="AGR" id="Xenbase:XB-GENE-963717"/>
<dbReference type="CTD" id="170622"/>
<dbReference type="Xenbase" id="XB-GENE-963717">
    <property type="gene designation" value="commd6"/>
</dbReference>
<dbReference type="eggNOG" id="ENOG502S0MA">
    <property type="taxonomic scope" value="Eukaryota"/>
</dbReference>
<dbReference type="InParanoid" id="Q28HC7"/>
<dbReference type="OrthoDB" id="10251827at2759"/>
<dbReference type="Reactome" id="R-XTR-8951664">
    <property type="pathway name" value="Neddylation"/>
</dbReference>
<dbReference type="Proteomes" id="UP000008143">
    <property type="component" value="Chromosome 2"/>
</dbReference>
<dbReference type="GO" id="GO:0005737">
    <property type="term" value="C:cytoplasm"/>
    <property type="evidence" value="ECO:0007669"/>
    <property type="project" value="UniProtKB-SubCell"/>
</dbReference>
<dbReference type="GO" id="GO:0005634">
    <property type="term" value="C:nucleus"/>
    <property type="evidence" value="ECO:0007669"/>
    <property type="project" value="UniProtKB-SubCell"/>
</dbReference>
<dbReference type="InterPro" id="IPR017920">
    <property type="entry name" value="COMM"/>
</dbReference>
<dbReference type="InterPro" id="IPR047155">
    <property type="entry name" value="COMMD4/6/7/8"/>
</dbReference>
<dbReference type="PANTHER" id="PTHR16231">
    <property type="entry name" value="COMM DOMAIN-CONTAINING PROTEIN 4-8 FAMILY MEMBER"/>
    <property type="match status" value="1"/>
</dbReference>
<dbReference type="PANTHER" id="PTHR16231:SF5">
    <property type="entry name" value="COMM DOMAIN-CONTAINING PROTEIN 6"/>
    <property type="match status" value="1"/>
</dbReference>
<dbReference type="Pfam" id="PF07258">
    <property type="entry name" value="COMM_domain"/>
    <property type="match status" value="1"/>
</dbReference>
<dbReference type="Pfam" id="PF21672">
    <property type="entry name" value="COMM_HN"/>
    <property type="match status" value="1"/>
</dbReference>
<dbReference type="PROSITE" id="PS51269">
    <property type="entry name" value="COMM"/>
    <property type="match status" value="1"/>
</dbReference>
<comment type="function">
    <text evidence="1">Scaffold protein in the commander complex that is essential for endosomal recycling of transmembrane cargos; the commander complex is composed of the CCC subcomplex and the retriever subcomplex (By similarity). May modulate activity of cullin-RING E3 ubiquitin ligase (CRL) complexes (By similarity). Down-regulates activation of NF-kappa-B (By similarity). Inhibits TNF-induced NFKB1 activation (By similarity).</text>
</comment>
<comment type="subunit">
    <text evidence="1">Component of the commander complex consisting of the CCC subcomplex and the retriever subcomplex (By similarity). Component of the CCC subcomplex (By similarity).</text>
</comment>
<comment type="subcellular location">
    <subcellularLocation>
        <location evidence="1">Nucleus</location>
    </subcellularLocation>
    <subcellularLocation>
        <location evidence="1">Cytoplasm</location>
    </subcellularLocation>
</comment>
<comment type="similarity">
    <text evidence="3">Belongs to the COMM domain-containing protein 6 family.</text>
</comment>
<reference key="1">
    <citation type="submission" date="2006-10" db="EMBL/GenBank/DDBJ databases">
        <authorList>
            <consortium name="Sanger Xenopus tropicalis EST/cDNA project"/>
        </authorList>
    </citation>
    <scope>NUCLEOTIDE SEQUENCE [LARGE SCALE MRNA]</scope>
    <source>
        <tissue>Egg</tissue>
    </source>
</reference>
<protein>
    <recommendedName>
        <fullName>COMM domain-containing protein 6</fullName>
    </recommendedName>
</protein>
<sequence length="197" mass="22681">MFDRELEAFGFEKTDDLIKIVPPDLFAELCQQSVQHLQRQRSGVDCQVIFQSFQAAGVLISEDELRKIIRWITTLFSTAAKYNVTCEELLSRLISKLPKQILQVIRHVWNEEGKRLSELEKSRDLLPSGELVDFQWKIGMAVSSDSCRSLNHPYVTIELKVADYSGQITSKVFELTIPEFQNFHKQVKEMSSVLETV</sequence>
<feature type="chain" id="PRO_0000294143" description="COMM domain-containing protein 6">
    <location>
        <begin position="1"/>
        <end position="197"/>
    </location>
</feature>
<feature type="domain" description="COMM" evidence="2">
    <location>
        <begin position="130"/>
        <end position="197"/>
    </location>
</feature>